<comment type="function">
    <text evidence="1">Plays an essential role in viral RNA transcription and replication by forming the heterotrimeric polymerase complex together with PB1 and PB2 subunits. The complex transcribes viral mRNAs by using a unique mechanism called cap-snatching. It consists in the hijacking and cleavage of host capped pre-mRNAs. These short capped RNAs are then used as primers for viral mRNAs. The PB2 subunit is responsible for the binding of the 5' cap of cellular pre-mRNAs which are subsequently cleaved after 10-13 nucleotides by the PA subunit that carries the endonuclease activity.</text>
</comment>
<comment type="cofactor">
    <cofactor evidence="1">
        <name>Mn(2+)</name>
        <dbReference type="ChEBI" id="CHEBI:29035"/>
    </cofactor>
    <text evidence="1">Binds 2 manganese ions per subunit.</text>
</comment>
<comment type="subunit">
    <text evidence="1">Influenza RNA polymerase is composed of three subunits: PB1, PB2 and PA. Interacts (via C-terminus) with PB1 (via N-terminus).</text>
</comment>
<comment type="subcellular location">
    <subcellularLocation>
        <location evidence="1">Host cytoplasm</location>
    </subcellularLocation>
    <subcellularLocation>
        <location evidence="1">Host nucleus</location>
    </subcellularLocation>
    <text evidence="1">PB1 and PA are transported in the host nucleus as a complex.</text>
</comment>
<comment type="alternative products">
    <event type="ribosomal frameshifting"/>
    <isoform>
        <id>P13874-1</id>
        <name>PA</name>
        <sequence type="displayed"/>
    </isoform>
    <isoform>
        <id>P13874-2</id>
        <name>PA-X</name>
        <sequence type="not described"/>
    </isoform>
</comment>
<comment type="PTM">
    <text evidence="1">Phosphorylated on serines and threonines by host kinases, including human casein kinase II.</text>
</comment>
<comment type="similarity">
    <text evidence="1">Belongs to the influenza viruses PA family.</text>
</comment>
<dbReference type="EC" id="3.1.-.-" evidence="1"/>
<dbReference type="EMBL" id="M20172">
    <property type="protein sequence ID" value="AAA43766.1"/>
    <property type="molecule type" value="Genomic_RNA"/>
</dbReference>
<dbReference type="PIR" id="F28604">
    <property type="entry name" value="P2IVBW"/>
</dbReference>
<dbReference type="SMR" id="P13874"/>
<dbReference type="IntAct" id="P13874">
    <property type="interactions" value="1"/>
</dbReference>
<dbReference type="GO" id="GO:0030430">
    <property type="term" value="C:host cell cytoplasm"/>
    <property type="evidence" value="ECO:0007669"/>
    <property type="project" value="UniProtKB-SubCell"/>
</dbReference>
<dbReference type="GO" id="GO:0042025">
    <property type="term" value="C:host cell nucleus"/>
    <property type="evidence" value="ECO:0007669"/>
    <property type="project" value="UniProtKB-SubCell"/>
</dbReference>
<dbReference type="GO" id="GO:0004519">
    <property type="term" value="F:endonuclease activity"/>
    <property type="evidence" value="ECO:0007669"/>
    <property type="project" value="UniProtKB-KW"/>
</dbReference>
<dbReference type="GO" id="GO:0046872">
    <property type="term" value="F:metal ion binding"/>
    <property type="evidence" value="ECO:0007669"/>
    <property type="project" value="UniProtKB-KW"/>
</dbReference>
<dbReference type="GO" id="GO:0003723">
    <property type="term" value="F:RNA binding"/>
    <property type="evidence" value="ECO:0007669"/>
    <property type="project" value="UniProtKB-UniRule"/>
</dbReference>
<dbReference type="GO" id="GO:0075526">
    <property type="term" value="P:cap snatching"/>
    <property type="evidence" value="ECO:0007669"/>
    <property type="project" value="UniProtKB-UniRule"/>
</dbReference>
<dbReference type="GO" id="GO:0006351">
    <property type="term" value="P:DNA-templated transcription"/>
    <property type="evidence" value="ECO:0007669"/>
    <property type="project" value="UniProtKB-UniRule"/>
</dbReference>
<dbReference type="GO" id="GO:0039657">
    <property type="term" value="P:symbiont-mediated suppression of host gene expression"/>
    <property type="evidence" value="ECO:0007669"/>
    <property type="project" value="UniProtKB-KW"/>
</dbReference>
<dbReference type="GO" id="GO:0039523">
    <property type="term" value="P:symbiont-mediated suppression of host mRNA transcription via inhibition of RNA polymerase II activity"/>
    <property type="evidence" value="ECO:0007669"/>
    <property type="project" value="UniProtKB-UniRule"/>
</dbReference>
<dbReference type="GO" id="GO:0039694">
    <property type="term" value="P:viral RNA genome replication"/>
    <property type="evidence" value="ECO:0007669"/>
    <property type="project" value="InterPro"/>
</dbReference>
<dbReference type="GO" id="GO:0075523">
    <property type="term" value="P:viral translational frameshifting"/>
    <property type="evidence" value="ECO:0007669"/>
    <property type="project" value="UniProtKB-KW"/>
</dbReference>
<dbReference type="Gene3D" id="3.40.91.90">
    <property type="entry name" value="Influenza RNA-dependent RNA polymerase subunit PA, endonuclease domain"/>
    <property type="match status" value="1"/>
</dbReference>
<dbReference type="HAMAP" id="MF_04063">
    <property type="entry name" value="INFV_PA"/>
    <property type="match status" value="1"/>
</dbReference>
<dbReference type="InterPro" id="IPR037534">
    <property type="entry name" value="INFV_PA"/>
</dbReference>
<dbReference type="InterPro" id="IPR001009">
    <property type="entry name" value="PA/PA-X"/>
</dbReference>
<dbReference type="InterPro" id="IPR038372">
    <property type="entry name" value="PA/PA-X_sf"/>
</dbReference>
<dbReference type="Pfam" id="PF00603">
    <property type="entry name" value="Flu_PA"/>
    <property type="match status" value="1"/>
</dbReference>
<organismHost>
    <name type="scientific">Homo sapiens</name>
    <name type="common">Human</name>
    <dbReference type="NCBI Taxonomy" id="9606"/>
</organismHost>
<name>PA_INBAD</name>
<feature type="chain" id="PRO_0000078807" description="Polymerase acidic protein">
    <location>
        <begin position="1"/>
        <end position="726"/>
    </location>
</feature>
<feature type="short sequence motif" description="Nuclear localization signal 1 (NLS1)" evidence="1">
    <location>
        <begin position="125"/>
        <end position="140"/>
    </location>
</feature>
<feature type="short sequence motif" description="Nuclear localization signal 2 (NLS2)" evidence="1">
    <location>
        <begin position="183"/>
        <end position="244"/>
    </location>
</feature>
<feature type="binding site" evidence="1">
    <location>
        <position position="41"/>
    </location>
    <ligand>
        <name>Mn(2+)</name>
        <dbReference type="ChEBI" id="CHEBI:29035"/>
        <label>1</label>
    </ligand>
</feature>
<feature type="binding site" evidence="1">
    <location>
        <position position="81"/>
    </location>
    <ligand>
        <name>Mn(2+)</name>
        <dbReference type="ChEBI" id="CHEBI:29035"/>
        <label>2</label>
    </ligand>
</feature>
<feature type="binding site" evidence="1">
    <location>
        <position position="109"/>
    </location>
    <ligand>
        <name>Mn(2+)</name>
        <dbReference type="ChEBI" id="CHEBI:29035"/>
        <label>1</label>
    </ligand>
</feature>
<feature type="binding site" evidence="1">
    <location>
        <position position="109"/>
    </location>
    <ligand>
        <name>Mn(2+)</name>
        <dbReference type="ChEBI" id="CHEBI:29035"/>
        <label>2</label>
    </ligand>
</feature>
<feature type="binding site" evidence="1">
    <location>
        <position position="120"/>
    </location>
    <ligand>
        <name>Mn(2+)</name>
        <dbReference type="ChEBI" id="CHEBI:29035"/>
        <label>1</label>
    </ligand>
</feature>
<feature type="binding site" evidence="1">
    <location>
        <position position="121"/>
    </location>
    <ligand>
        <name>Mn(2+)</name>
        <dbReference type="ChEBI" id="CHEBI:29035"/>
        <label>1</label>
    </ligand>
</feature>
<reference key="1">
    <citation type="journal article" date="1988" name="Virology">
        <title>Sequence comparison of wild-type and cold-adapted B/Ann Arbor/1/66 influenza virus genes.</title>
        <authorList>
            <person name="Deborde D.C."/>
            <person name="Donabedian A.M."/>
            <person name="Herlocher M.L."/>
            <person name="Naeve C.W."/>
            <person name="Maassab H.F."/>
        </authorList>
    </citation>
    <scope>NUCLEOTIDE SEQUENCE [GENOMIC RNA]</scope>
</reference>
<proteinExistence type="inferred from homology"/>
<protein>
    <recommendedName>
        <fullName evidence="1">Polymerase acidic protein</fullName>
        <ecNumber evidence="1">3.1.-.-</ecNumber>
    </recommendedName>
    <alternativeName>
        <fullName evidence="1">RNA-directed RNA polymerase subunit P2</fullName>
    </alternativeName>
</protein>
<evidence type="ECO:0000255" key="1">
    <source>
        <dbReference type="HAMAP-Rule" id="MF_04063"/>
    </source>
</evidence>
<organism>
    <name type="scientific">Influenza B virus (strain B/Ann Arbor/1/1966 [wild-type])</name>
    <dbReference type="NCBI Taxonomy" id="11523"/>
    <lineage>
        <taxon>Viruses</taxon>
        <taxon>Riboviria</taxon>
        <taxon>Orthornavirae</taxon>
        <taxon>Negarnaviricota</taxon>
        <taxon>Polyploviricotina</taxon>
        <taxon>Insthoviricetes</taxon>
        <taxon>Articulavirales</taxon>
        <taxon>Orthomyxoviridae</taxon>
        <taxon>Betainfluenzavirus</taxon>
        <taxon>Betainfluenzavirus influenzae</taxon>
        <taxon>Influenza B virus</taxon>
    </lineage>
</organism>
<keyword id="KW-1157">Cap snatching</keyword>
<keyword id="KW-0255">Endonuclease</keyword>
<keyword id="KW-1262">Eukaryotic host gene expression shutoff by virus</keyword>
<keyword id="KW-1191">Eukaryotic host transcription shutoff by virus</keyword>
<keyword id="KW-1035">Host cytoplasm</keyword>
<keyword id="KW-1190">Host gene expression shutoff by virus</keyword>
<keyword id="KW-1048">Host nucleus</keyword>
<keyword id="KW-0945">Host-virus interaction</keyword>
<keyword id="KW-0378">Hydrolase</keyword>
<keyword id="KW-1104">Inhibition of host RNA polymerase II by virus</keyword>
<keyword id="KW-0464">Manganese</keyword>
<keyword id="KW-0479">Metal-binding</keyword>
<keyword id="KW-0540">Nuclease</keyword>
<keyword id="KW-0597">Phosphoprotein</keyword>
<keyword id="KW-0688">Ribosomal frameshifting</keyword>
<sequence>MDTFITRNFQTTIIQKAKNTMAEFSEDPELQPAMLFNICVHLEVCYVISDMNFLDEEGKTYTALEGQGKEQNLRPQYEVIEGMPRNIAWMVQRSLAQEHGIETPRYLADLFDYKTKRFIEVGITKGLADDYFWKKKEKLGNSMELMIFSYNQDYSLSNEHSLDEEGKGRVLSRLTELQAELSLKNLWQVLIGEEDIEKGIDFKLGQTISKLRDISVPAGFSNFEGMRSYIDNIDPKGAIERNLARMSPLVSVTPKKLKWEDLRPIGPHIYSHELPEVPYNAFLLMSDELGLANMTEGKSKKPKTLAKECLEKYSTLRDQTDPILIMKSEKANENFLWKLWRDCVNTISNEETSNELQKTNYAKWATGDGLTYQKIMKEVAIDDETMYQEEPKIPNKCRVAAWVQTEMNLLSTLTSKRALDLPEIGPDVAPVEHVGSERRKYFVNEINYCKASTVMMKYVLFHTSLLNESNASMGKYKVIPITNRVVNEKGESFDILYGLAVKGQSHLRGDTDVVTVVTFEFSSTDPRVDSGKWPKYTVFRIGSLFVSGREKSVYLYCRVNGTNKIQMKWGMEARRCLLQSMQQMEAIVDQESSIQGYDMTKACFKGDRVNSPKTFSIGTQEGKLVKGSFGKALRVIFTKCLMHYVFGNAQLEGFSAESRRLLLLIQALKDRKGPWVFDLEGMYSGIEECISNNPWVIQSAYWFNEWLGFEKEGSKVLESIDEIMDE</sequence>
<gene>
    <name evidence="1" type="primary">PA</name>
</gene>
<accession>P13874</accession>